<proteinExistence type="inferred from homology"/>
<gene>
    <name type="ordered locus">MIMI_R833</name>
</gene>
<accession>Q5UQH8</accession>
<name>YR833_MIMIV</name>
<dbReference type="EMBL" id="AY653733">
    <property type="protein sequence ID" value="AAV51091.1"/>
    <property type="molecule type" value="Genomic_DNA"/>
</dbReference>
<dbReference type="SMR" id="Q5UQH8"/>
<dbReference type="Proteomes" id="UP000001134">
    <property type="component" value="Genome"/>
</dbReference>
<dbReference type="GO" id="GO:0050660">
    <property type="term" value="F:flavin adenine dinucleotide binding"/>
    <property type="evidence" value="ECO:0007669"/>
    <property type="project" value="InterPro"/>
</dbReference>
<dbReference type="GO" id="GO:0016614">
    <property type="term" value="F:oxidoreductase activity, acting on CH-OH group of donors"/>
    <property type="evidence" value="ECO:0007669"/>
    <property type="project" value="InterPro"/>
</dbReference>
<dbReference type="Gene3D" id="3.50.50.60">
    <property type="entry name" value="FAD/NAD(P)-binding domain"/>
    <property type="match status" value="1"/>
</dbReference>
<dbReference type="InterPro" id="IPR036188">
    <property type="entry name" value="FAD/NAD-bd_sf"/>
</dbReference>
<dbReference type="InterPro" id="IPR012132">
    <property type="entry name" value="GMC_OxRdtase"/>
</dbReference>
<dbReference type="InterPro" id="IPR007867">
    <property type="entry name" value="GMC_OxRtase_C"/>
</dbReference>
<dbReference type="PANTHER" id="PTHR11552:SF147">
    <property type="entry name" value="CHOLINE DEHYDROGENASE, MITOCHONDRIAL"/>
    <property type="match status" value="1"/>
</dbReference>
<dbReference type="PANTHER" id="PTHR11552">
    <property type="entry name" value="GLUCOSE-METHANOL-CHOLINE GMC OXIDOREDUCTASE"/>
    <property type="match status" value="1"/>
</dbReference>
<dbReference type="Pfam" id="PF05199">
    <property type="entry name" value="GMC_oxred_C"/>
    <property type="match status" value="1"/>
</dbReference>
<dbReference type="SUPFAM" id="SSF51905">
    <property type="entry name" value="FAD/NAD(P)-binding domain"/>
    <property type="match status" value="1"/>
</dbReference>
<comment type="similarity">
    <text evidence="1">Belongs to the GMC oxidoreductase family.</text>
</comment>
<comment type="caution">
    <text evidence="1">The two ORFs R832 and R833 correspond respectively to the N- and C-terminal of a GMC-type oxidoreductase.</text>
</comment>
<evidence type="ECO:0000305" key="1"/>
<feature type="chain" id="PRO_0000243956" description="Putative truncated GMC-type inactive oxidoreductase R833">
    <location>
        <begin position="1"/>
        <end position="81"/>
    </location>
</feature>
<organism>
    <name type="scientific">Acanthamoeba polyphaga mimivirus</name>
    <name type="common">APMV</name>
    <dbReference type="NCBI Taxonomy" id="212035"/>
    <lineage>
        <taxon>Viruses</taxon>
        <taxon>Varidnaviria</taxon>
        <taxon>Bamfordvirae</taxon>
        <taxon>Nucleocytoviricota</taxon>
        <taxon>Megaviricetes</taxon>
        <taxon>Imitervirales</taxon>
        <taxon>Mimiviridae</taxon>
        <taxon>Megamimivirinae</taxon>
        <taxon>Mimivirus</taxon>
        <taxon>Mimivirus bradfordmassiliense</taxon>
    </lineage>
</organism>
<sequence length="81" mass="8906">MPNCYNNMTEFYLASYLQFASSGYHYTGTCALGKVVDPNTGLVYGFENLYVTDASVVPKTPRGNTQATTYVVSGKLSEKIF</sequence>
<keyword id="KW-1185">Reference proteome</keyword>
<protein>
    <recommendedName>
        <fullName>Putative truncated GMC-type inactive oxidoreductase R833</fullName>
    </recommendedName>
</protein>
<organismHost>
    <name type="scientific">Acanthamoeba polyphaga</name>
    <name type="common">Amoeba</name>
    <dbReference type="NCBI Taxonomy" id="5757"/>
</organismHost>
<reference key="1">
    <citation type="journal article" date="2004" name="Science">
        <title>The 1.2-megabase genome sequence of Mimivirus.</title>
        <authorList>
            <person name="Raoult D."/>
            <person name="Audic S."/>
            <person name="Robert C."/>
            <person name="Abergel C."/>
            <person name="Renesto P."/>
            <person name="Ogata H."/>
            <person name="La Scola B."/>
            <person name="Susan M."/>
            <person name="Claverie J.-M."/>
        </authorList>
    </citation>
    <scope>NUCLEOTIDE SEQUENCE [LARGE SCALE GENOMIC DNA]</scope>
    <source>
        <strain>Rowbotham-Bradford</strain>
    </source>
</reference>